<keyword id="KW-0012">Acyltransferase</keyword>
<keyword id="KW-0133">Cell shape</keyword>
<keyword id="KW-0961">Cell wall biogenesis/degradation</keyword>
<keyword id="KW-0963">Cytoplasm</keyword>
<keyword id="KW-0460">Magnesium</keyword>
<keyword id="KW-0479">Metal-binding</keyword>
<keyword id="KW-0511">Multifunctional enzyme</keyword>
<keyword id="KW-0548">Nucleotidyltransferase</keyword>
<keyword id="KW-0573">Peptidoglycan synthesis</keyword>
<keyword id="KW-1185">Reference proteome</keyword>
<keyword id="KW-0677">Repeat</keyword>
<keyword id="KW-0808">Transferase</keyword>
<dbReference type="EC" id="2.7.7.23" evidence="1"/>
<dbReference type="EC" id="2.3.1.157" evidence="1"/>
<dbReference type="EMBL" id="BA000021">
    <property type="protein sequence ID" value="BAC24156.1"/>
    <property type="molecule type" value="Genomic_DNA"/>
</dbReference>
<dbReference type="SMR" id="Q8D3J1"/>
<dbReference type="STRING" id="36870.gene:10368488"/>
<dbReference type="KEGG" id="wbr:glmU"/>
<dbReference type="eggNOG" id="COG1207">
    <property type="taxonomic scope" value="Bacteria"/>
</dbReference>
<dbReference type="HOGENOM" id="CLU_029499_15_2_6"/>
<dbReference type="OrthoDB" id="9775031at2"/>
<dbReference type="UniPathway" id="UPA00113">
    <property type="reaction ID" value="UER00532"/>
</dbReference>
<dbReference type="UniPathway" id="UPA00113">
    <property type="reaction ID" value="UER00533"/>
</dbReference>
<dbReference type="UniPathway" id="UPA00973"/>
<dbReference type="Proteomes" id="UP000000562">
    <property type="component" value="Chromosome"/>
</dbReference>
<dbReference type="GO" id="GO:0005737">
    <property type="term" value="C:cytoplasm"/>
    <property type="evidence" value="ECO:0007669"/>
    <property type="project" value="UniProtKB-SubCell"/>
</dbReference>
<dbReference type="GO" id="GO:0016020">
    <property type="term" value="C:membrane"/>
    <property type="evidence" value="ECO:0007669"/>
    <property type="project" value="GOC"/>
</dbReference>
<dbReference type="GO" id="GO:0019134">
    <property type="term" value="F:glucosamine-1-phosphate N-acetyltransferase activity"/>
    <property type="evidence" value="ECO:0007669"/>
    <property type="project" value="UniProtKB-UniRule"/>
</dbReference>
<dbReference type="GO" id="GO:0000287">
    <property type="term" value="F:magnesium ion binding"/>
    <property type="evidence" value="ECO:0007669"/>
    <property type="project" value="UniProtKB-UniRule"/>
</dbReference>
<dbReference type="GO" id="GO:0003977">
    <property type="term" value="F:UDP-N-acetylglucosamine diphosphorylase activity"/>
    <property type="evidence" value="ECO:0007669"/>
    <property type="project" value="UniProtKB-UniRule"/>
</dbReference>
<dbReference type="GO" id="GO:0000902">
    <property type="term" value="P:cell morphogenesis"/>
    <property type="evidence" value="ECO:0007669"/>
    <property type="project" value="UniProtKB-UniRule"/>
</dbReference>
<dbReference type="GO" id="GO:0071555">
    <property type="term" value="P:cell wall organization"/>
    <property type="evidence" value="ECO:0007669"/>
    <property type="project" value="UniProtKB-KW"/>
</dbReference>
<dbReference type="GO" id="GO:0009245">
    <property type="term" value="P:lipid A biosynthetic process"/>
    <property type="evidence" value="ECO:0007669"/>
    <property type="project" value="UniProtKB-UniRule"/>
</dbReference>
<dbReference type="GO" id="GO:0009252">
    <property type="term" value="P:peptidoglycan biosynthetic process"/>
    <property type="evidence" value="ECO:0007669"/>
    <property type="project" value="UniProtKB-UniRule"/>
</dbReference>
<dbReference type="GO" id="GO:0008360">
    <property type="term" value="P:regulation of cell shape"/>
    <property type="evidence" value="ECO:0007669"/>
    <property type="project" value="UniProtKB-KW"/>
</dbReference>
<dbReference type="GO" id="GO:0006048">
    <property type="term" value="P:UDP-N-acetylglucosamine biosynthetic process"/>
    <property type="evidence" value="ECO:0007669"/>
    <property type="project" value="UniProtKB-UniPathway"/>
</dbReference>
<dbReference type="CDD" id="cd02540">
    <property type="entry name" value="GT2_GlmU_N_bac"/>
    <property type="match status" value="1"/>
</dbReference>
<dbReference type="CDD" id="cd03353">
    <property type="entry name" value="LbH_GlmU_C"/>
    <property type="match status" value="1"/>
</dbReference>
<dbReference type="Gene3D" id="2.160.10.10">
    <property type="entry name" value="Hexapeptide repeat proteins"/>
    <property type="match status" value="1"/>
</dbReference>
<dbReference type="Gene3D" id="3.90.550.10">
    <property type="entry name" value="Spore Coat Polysaccharide Biosynthesis Protein SpsA, Chain A"/>
    <property type="match status" value="1"/>
</dbReference>
<dbReference type="HAMAP" id="MF_01631">
    <property type="entry name" value="GlmU"/>
    <property type="match status" value="1"/>
</dbReference>
<dbReference type="InterPro" id="IPR005882">
    <property type="entry name" value="Bifunctional_GlmU"/>
</dbReference>
<dbReference type="InterPro" id="IPR050065">
    <property type="entry name" value="GlmU-like"/>
</dbReference>
<dbReference type="InterPro" id="IPR038009">
    <property type="entry name" value="GlmU_C_LbH"/>
</dbReference>
<dbReference type="InterPro" id="IPR001451">
    <property type="entry name" value="Hexapep"/>
</dbReference>
<dbReference type="InterPro" id="IPR025877">
    <property type="entry name" value="MobA-like_NTP_Trfase"/>
</dbReference>
<dbReference type="InterPro" id="IPR029044">
    <property type="entry name" value="Nucleotide-diphossugar_trans"/>
</dbReference>
<dbReference type="InterPro" id="IPR011004">
    <property type="entry name" value="Trimer_LpxA-like_sf"/>
</dbReference>
<dbReference type="NCBIfam" id="TIGR01173">
    <property type="entry name" value="glmU"/>
    <property type="match status" value="1"/>
</dbReference>
<dbReference type="PANTHER" id="PTHR43584:SF3">
    <property type="entry name" value="BIFUNCTIONAL PROTEIN GLMU"/>
    <property type="match status" value="1"/>
</dbReference>
<dbReference type="PANTHER" id="PTHR43584">
    <property type="entry name" value="NUCLEOTIDYL TRANSFERASE"/>
    <property type="match status" value="1"/>
</dbReference>
<dbReference type="Pfam" id="PF00132">
    <property type="entry name" value="Hexapep"/>
    <property type="match status" value="2"/>
</dbReference>
<dbReference type="Pfam" id="PF12804">
    <property type="entry name" value="NTP_transf_3"/>
    <property type="match status" value="1"/>
</dbReference>
<dbReference type="SUPFAM" id="SSF53448">
    <property type="entry name" value="Nucleotide-diphospho-sugar transferases"/>
    <property type="match status" value="1"/>
</dbReference>
<dbReference type="SUPFAM" id="SSF51161">
    <property type="entry name" value="Trimeric LpxA-like enzymes"/>
    <property type="match status" value="1"/>
</dbReference>
<gene>
    <name evidence="1" type="primary">glmU</name>
    <name type="ordered locus">WIGBR0100</name>
</gene>
<name>GLMU_WIGBR</name>
<evidence type="ECO:0000255" key="1">
    <source>
        <dbReference type="HAMAP-Rule" id="MF_01631"/>
    </source>
</evidence>
<comment type="function">
    <text evidence="1">Catalyzes the last two sequential reactions in the de novo biosynthetic pathway for UDP-N-acetylglucosamine (UDP-GlcNAc). The C-terminal domain catalyzes the transfer of acetyl group from acetyl coenzyme A to glucosamine-1-phosphate (GlcN-1-P) to produce N-acetylglucosamine-1-phosphate (GlcNAc-1-P), which is converted into UDP-GlcNAc by the transfer of uridine 5-monophosphate (from uridine 5-triphosphate), a reaction catalyzed by the N-terminal domain.</text>
</comment>
<comment type="catalytic activity">
    <reaction evidence="1">
        <text>alpha-D-glucosamine 1-phosphate + acetyl-CoA = N-acetyl-alpha-D-glucosamine 1-phosphate + CoA + H(+)</text>
        <dbReference type="Rhea" id="RHEA:13725"/>
        <dbReference type="ChEBI" id="CHEBI:15378"/>
        <dbReference type="ChEBI" id="CHEBI:57287"/>
        <dbReference type="ChEBI" id="CHEBI:57288"/>
        <dbReference type="ChEBI" id="CHEBI:57776"/>
        <dbReference type="ChEBI" id="CHEBI:58516"/>
        <dbReference type="EC" id="2.3.1.157"/>
    </reaction>
</comment>
<comment type="catalytic activity">
    <reaction evidence="1">
        <text>N-acetyl-alpha-D-glucosamine 1-phosphate + UTP + H(+) = UDP-N-acetyl-alpha-D-glucosamine + diphosphate</text>
        <dbReference type="Rhea" id="RHEA:13509"/>
        <dbReference type="ChEBI" id="CHEBI:15378"/>
        <dbReference type="ChEBI" id="CHEBI:33019"/>
        <dbReference type="ChEBI" id="CHEBI:46398"/>
        <dbReference type="ChEBI" id="CHEBI:57705"/>
        <dbReference type="ChEBI" id="CHEBI:57776"/>
        <dbReference type="EC" id="2.7.7.23"/>
    </reaction>
</comment>
<comment type="cofactor">
    <cofactor evidence="1">
        <name>Mg(2+)</name>
        <dbReference type="ChEBI" id="CHEBI:18420"/>
    </cofactor>
    <text evidence="1">Binds 1 Mg(2+) ion per subunit.</text>
</comment>
<comment type="pathway">
    <text evidence="1">Nucleotide-sugar biosynthesis; UDP-N-acetyl-alpha-D-glucosamine biosynthesis; N-acetyl-alpha-D-glucosamine 1-phosphate from alpha-D-glucosamine 6-phosphate (route II): step 2/2.</text>
</comment>
<comment type="pathway">
    <text evidence="1">Nucleotide-sugar biosynthesis; UDP-N-acetyl-alpha-D-glucosamine biosynthesis; UDP-N-acetyl-alpha-D-glucosamine from N-acetyl-alpha-D-glucosamine 1-phosphate: step 1/1.</text>
</comment>
<comment type="pathway">
    <text evidence="1">Bacterial outer membrane biogenesis; LPS lipid A biosynthesis.</text>
</comment>
<comment type="subunit">
    <text evidence="1">Homotrimer.</text>
</comment>
<comment type="subcellular location">
    <subcellularLocation>
        <location evidence="1">Cytoplasm</location>
    </subcellularLocation>
</comment>
<comment type="similarity">
    <text evidence="1">In the N-terminal section; belongs to the N-acetylglucosamine-1-phosphate uridyltransferase family.</text>
</comment>
<comment type="similarity">
    <text evidence="1">In the C-terminal section; belongs to the transferase hexapeptide repeat family.</text>
</comment>
<accession>Q8D3J1</accession>
<proteinExistence type="inferred from homology"/>
<protein>
    <recommendedName>
        <fullName evidence="1">Bifunctional protein GlmU</fullName>
    </recommendedName>
    <domain>
        <recommendedName>
            <fullName evidence="1">UDP-N-acetylglucosamine pyrophosphorylase</fullName>
            <ecNumber evidence="1">2.7.7.23</ecNumber>
        </recommendedName>
        <alternativeName>
            <fullName evidence="1">N-acetylglucosamine-1-phosphate uridyltransferase</fullName>
        </alternativeName>
    </domain>
    <domain>
        <recommendedName>
            <fullName evidence="1">Glucosamine-1-phosphate N-acetyltransferase</fullName>
            <ecNumber evidence="1">2.3.1.157</ecNumber>
        </recommendedName>
    </domain>
</protein>
<feature type="chain" id="PRO_0000233877" description="Bifunctional protein GlmU">
    <location>
        <begin position="1"/>
        <end position="461"/>
    </location>
</feature>
<feature type="region of interest" description="Pyrophosphorylase" evidence="1">
    <location>
        <begin position="1"/>
        <end position="236"/>
    </location>
</feature>
<feature type="region of interest" description="Linker" evidence="1">
    <location>
        <begin position="237"/>
        <end position="257"/>
    </location>
</feature>
<feature type="region of interest" description="N-acetyltransferase" evidence="1">
    <location>
        <begin position="258"/>
        <end position="461"/>
    </location>
</feature>
<feature type="active site" description="Proton acceptor" evidence="1">
    <location>
        <position position="370"/>
    </location>
</feature>
<feature type="binding site" evidence="1">
    <location>
        <position position="27"/>
    </location>
    <ligand>
        <name>UDP-N-acetyl-alpha-D-glucosamine</name>
        <dbReference type="ChEBI" id="CHEBI:57705"/>
    </ligand>
</feature>
<feature type="binding site" evidence="1">
    <location>
        <position position="80"/>
    </location>
    <ligand>
        <name>UDP-N-acetyl-alpha-D-glucosamine</name>
        <dbReference type="ChEBI" id="CHEBI:57705"/>
    </ligand>
</feature>
<feature type="binding site" evidence="1">
    <location>
        <begin position="85"/>
        <end position="86"/>
    </location>
    <ligand>
        <name>UDP-N-acetyl-alpha-D-glucosamine</name>
        <dbReference type="ChEBI" id="CHEBI:57705"/>
    </ligand>
</feature>
<feature type="binding site" evidence="1">
    <location>
        <begin position="109"/>
        <end position="111"/>
    </location>
    <ligand>
        <name>UDP-N-acetyl-alpha-D-glucosamine</name>
        <dbReference type="ChEBI" id="CHEBI:57705"/>
    </ligand>
</feature>
<feature type="binding site" evidence="1">
    <location>
        <position position="111"/>
    </location>
    <ligand>
        <name>Mg(2+)</name>
        <dbReference type="ChEBI" id="CHEBI:18420"/>
    </ligand>
</feature>
<feature type="binding site" evidence="1">
    <location>
        <position position="146"/>
    </location>
    <ligand>
        <name>UDP-N-acetyl-alpha-D-glucosamine</name>
        <dbReference type="ChEBI" id="CHEBI:57705"/>
    </ligand>
</feature>
<feature type="binding site" evidence="1">
    <location>
        <position position="160"/>
    </location>
    <ligand>
        <name>UDP-N-acetyl-alpha-D-glucosamine</name>
        <dbReference type="ChEBI" id="CHEBI:57705"/>
    </ligand>
</feature>
<feature type="binding site" evidence="1">
    <location>
        <position position="175"/>
    </location>
    <ligand>
        <name>UDP-N-acetyl-alpha-D-glucosamine</name>
        <dbReference type="ChEBI" id="CHEBI:57705"/>
    </ligand>
</feature>
<feature type="binding site" evidence="1">
    <location>
        <position position="234"/>
    </location>
    <ligand>
        <name>Mg(2+)</name>
        <dbReference type="ChEBI" id="CHEBI:18420"/>
    </ligand>
</feature>
<feature type="binding site" evidence="1">
    <location>
        <position position="234"/>
    </location>
    <ligand>
        <name>UDP-N-acetyl-alpha-D-glucosamine</name>
        <dbReference type="ChEBI" id="CHEBI:57705"/>
    </ligand>
</feature>
<feature type="binding site" evidence="1">
    <location>
        <position position="358"/>
    </location>
    <ligand>
        <name>UDP-N-acetyl-alpha-D-glucosamine</name>
        <dbReference type="ChEBI" id="CHEBI:57705"/>
    </ligand>
</feature>
<feature type="binding site" evidence="1">
    <location>
        <position position="373"/>
    </location>
    <ligand>
        <name>UDP-N-acetyl-alpha-D-glucosamine</name>
        <dbReference type="ChEBI" id="CHEBI:57705"/>
    </ligand>
</feature>
<feature type="binding site" evidence="1">
    <location>
        <position position="384"/>
    </location>
    <ligand>
        <name>UDP-N-acetyl-alpha-D-glucosamine</name>
        <dbReference type="ChEBI" id="CHEBI:57705"/>
    </ligand>
</feature>
<feature type="binding site" evidence="1">
    <location>
        <position position="387"/>
    </location>
    <ligand>
        <name>acetyl-CoA</name>
        <dbReference type="ChEBI" id="CHEBI:57288"/>
    </ligand>
</feature>
<feature type="binding site" evidence="1">
    <location>
        <position position="430"/>
    </location>
    <ligand>
        <name>acetyl-CoA</name>
        <dbReference type="ChEBI" id="CHEBI:57288"/>
    </ligand>
</feature>
<feature type="binding site" evidence="1">
    <location>
        <position position="447"/>
    </location>
    <ligand>
        <name>acetyl-CoA</name>
        <dbReference type="ChEBI" id="CHEBI:57288"/>
    </ligand>
</feature>
<sequence>MNVLLQELFIIILSAGKGKRMFTSIPKVLHKLAGKPILQHIIDKVLYLKAKKINIVYGYEGKLLRKKIISRGFSLNWTLQSEQNGTGHAVQQVIFKEIGNDNDKILILYGDVPLISINTLRKLLYSHSGFNISLLTAVIDSPDGYGRIIRKNGKISKIIEHEDALSIDKNIREINTGVMVVNRYYLRFWLNKLLNKRNKDKEIYLTDIISIAYKSGNIINSVQPEKVFEIFGINNRFQLMKLEKIYQIEQAKKLLLNGVTLSDYNRFDLRGTLKHGKDIFIDINVVLKGSVIIGDRVKIGNGCVLKNVIINNDVIIHPYSIIEDACLDSNSVIGPFAHIHSKSKIKKNVHVGNFVEIKNTIFGKNSKVGHLSYLGDSDIGKNVNIGAGTITCNFDGKKKNKTIIKNNVFIGANSELIAPVIINSGAVVGAGTTVTKNINRKDKIISRIRQFSILRKENNSK</sequence>
<organism>
    <name type="scientific">Wigglesworthia glossinidia brevipalpis</name>
    <dbReference type="NCBI Taxonomy" id="36870"/>
    <lineage>
        <taxon>Bacteria</taxon>
        <taxon>Pseudomonadati</taxon>
        <taxon>Pseudomonadota</taxon>
        <taxon>Gammaproteobacteria</taxon>
        <taxon>Enterobacterales</taxon>
        <taxon>Erwiniaceae</taxon>
        <taxon>Wigglesworthia</taxon>
    </lineage>
</organism>
<reference key="1">
    <citation type="journal article" date="2002" name="Nat. Genet.">
        <title>Genome sequence of the endocellular obligate symbiont of tsetse flies, Wigglesworthia glossinidia.</title>
        <authorList>
            <person name="Akman L."/>
            <person name="Yamashita A."/>
            <person name="Watanabe H."/>
            <person name="Oshima K."/>
            <person name="Shiba T."/>
            <person name="Hattori M."/>
            <person name="Aksoy S."/>
        </authorList>
    </citation>
    <scope>NUCLEOTIDE SEQUENCE [LARGE SCALE GENOMIC DNA]</scope>
</reference>